<gene>
    <name type="primary">UGT3A2</name>
    <name type="ORF">PSEC0073</name>
    <name type="ORF">UNQ842/PRO1780</name>
</gene>
<feature type="signal peptide" evidence="2">
    <location>
        <begin position="1"/>
        <end position="22"/>
    </location>
</feature>
<feature type="chain" id="PRO_0000299153" description="UDP-glucuronosyltransferase 3A2">
    <location>
        <begin position="23"/>
        <end position="523"/>
    </location>
</feature>
<feature type="topological domain" description="Extracellular" evidence="2">
    <location>
        <begin position="23"/>
        <end position="483"/>
    </location>
</feature>
<feature type="transmembrane region" description="Helical" evidence="2">
    <location>
        <begin position="484"/>
        <end position="504"/>
    </location>
</feature>
<feature type="topological domain" description="Cytoplasmic" evidence="2">
    <location>
        <begin position="505"/>
        <end position="523"/>
    </location>
</feature>
<feature type="glycosylation site" description="N-linked (GlcNAc...) asparagine" evidence="2">
    <location>
        <position position="52"/>
    </location>
</feature>
<feature type="splice variant" id="VSP_046099" description="In isoform 2." evidence="4">
    <location>
        <begin position="32"/>
        <end position="65"/>
    </location>
</feature>
<feature type="sequence variant" id="VAR_057329" description="In dbSNP:rs2197514.">
    <original>Y</original>
    <variation>N</variation>
    <location>
        <position position="74"/>
    </location>
</feature>
<feature type="sequence variant" id="VAR_036036" description="In a colorectal cancer sample; somatic mutation; dbSNP:rs138640717." evidence="3">
    <original>R</original>
    <variation>H</variation>
    <location>
        <position position="515"/>
    </location>
</feature>
<feature type="sequence conflict" description="In Ref. 3; BAC11583." evidence="5" ref="3">
    <original>G</original>
    <variation>E</variation>
    <location>
        <position position="291"/>
    </location>
</feature>
<feature type="sequence conflict" description="In Ref. 2; BAG62419." evidence="5" ref="2">
    <original>E</original>
    <variation>G</variation>
    <location>
        <position position="311"/>
    </location>
</feature>
<feature type="sequence conflict" description="In Ref. 1; AAQ88782." evidence="5" ref="1">
    <original>L</original>
    <variation>F</variation>
    <location>
        <position position="486"/>
    </location>
</feature>
<name>UD3A2_HUMAN</name>
<keyword id="KW-0025">Alternative splicing</keyword>
<keyword id="KW-0325">Glycoprotein</keyword>
<keyword id="KW-0328">Glycosyltransferase</keyword>
<keyword id="KW-0472">Membrane</keyword>
<keyword id="KW-1267">Proteomics identification</keyword>
<keyword id="KW-1185">Reference proteome</keyword>
<keyword id="KW-0732">Signal</keyword>
<keyword id="KW-0808">Transferase</keyword>
<keyword id="KW-0812">Transmembrane</keyword>
<keyword id="KW-1133">Transmembrane helix</keyword>
<organism>
    <name type="scientific">Homo sapiens</name>
    <name type="common">Human</name>
    <dbReference type="NCBI Taxonomy" id="9606"/>
    <lineage>
        <taxon>Eukaryota</taxon>
        <taxon>Metazoa</taxon>
        <taxon>Chordata</taxon>
        <taxon>Craniata</taxon>
        <taxon>Vertebrata</taxon>
        <taxon>Euteleostomi</taxon>
        <taxon>Mammalia</taxon>
        <taxon>Eutheria</taxon>
        <taxon>Euarchontoglires</taxon>
        <taxon>Primates</taxon>
        <taxon>Haplorrhini</taxon>
        <taxon>Catarrhini</taxon>
        <taxon>Hominidae</taxon>
        <taxon>Homo</taxon>
    </lineage>
</organism>
<comment type="function">
    <text evidence="1">UDP-glucuronosyltransferases catalyze phase II biotransformation reactions in which lipophilic substrates are conjugated with glucuronic acid to increase water solubility and enhance excretion. They are of major importance in the conjugation and subsequent elimination of potentially toxic xenobiotics and endogenous compounds (By similarity).</text>
</comment>
<comment type="catalytic activity">
    <reaction>
        <text>glucuronate acceptor + UDP-alpha-D-glucuronate = acceptor beta-D-glucuronoside + UDP + H(+)</text>
        <dbReference type="Rhea" id="RHEA:21032"/>
        <dbReference type="ChEBI" id="CHEBI:15378"/>
        <dbReference type="ChEBI" id="CHEBI:58052"/>
        <dbReference type="ChEBI" id="CHEBI:58223"/>
        <dbReference type="ChEBI" id="CHEBI:132367"/>
        <dbReference type="ChEBI" id="CHEBI:132368"/>
        <dbReference type="EC" id="2.4.1.17"/>
    </reaction>
</comment>
<comment type="subcellular location">
    <subcellularLocation>
        <location evidence="5">Membrane</location>
        <topology evidence="5">Single-pass type I membrane protein</topology>
    </subcellularLocation>
</comment>
<comment type="alternative products">
    <event type="alternative splicing"/>
    <isoform>
        <id>Q3SY77-1</id>
        <name>1</name>
        <sequence type="displayed"/>
    </isoform>
    <isoform>
        <id>Q3SY77-2</id>
        <name>2</name>
        <sequence type="described" ref="VSP_046099"/>
    </isoform>
</comment>
<comment type="similarity">
    <text evidence="5">Belongs to the UDP-glycosyltransferase family.</text>
</comment>
<protein>
    <recommendedName>
        <fullName>UDP-glucuronosyltransferase 3A2</fullName>
        <shortName>UDPGT 3A2</shortName>
        <ecNumber>2.4.1.17</ecNumber>
    </recommendedName>
</protein>
<dbReference type="EC" id="2.4.1.17"/>
<dbReference type="EMBL" id="AY358416">
    <property type="protein sequence ID" value="AAQ88782.1"/>
    <property type="molecule type" value="mRNA"/>
</dbReference>
<dbReference type="EMBL" id="AK300751">
    <property type="protein sequence ID" value="BAG62419.1"/>
    <property type="molecule type" value="mRNA"/>
</dbReference>
<dbReference type="EMBL" id="AK075383">
    <property type="protein sequence ID" value="BAC11583.1"/>
    <property type="molecule type" value="mRNA"/>
</dbReference>
<dbReference type="EMBL" id="AC016612">
    <property type="status" value="NOT_ANNOTATED_CDS"/>
    <property type="molecule type" value="Genomic_DNA"/>
</dbReference>
<dbReference type="EMBL" id="BC103924">
    <property type="protein sequence ID" value="AAI03925.1"/>
    <property type="molecule type" value="mRNA"/>
</dbReference>
<dbReference type="EMBL" id="BC103925">
    <property type="protein sequence ID" value="AAI03926.1"/>
    <property type="molecule type" value="mRNA"/>
</dbReference>
<dbReference type="CCDS" id="CCDS3914.1">
    <molecule id="Q3SY77-1"/>
</dbReference>
<dbReference type="CCDS" id="CCDS54842.1">
    <molecule id="Q3SY77-2"/>
</dbReference>
<dbReference type="RefSeq" id="NP_001161788.1">
    <molecule id="Q3SY77-2"/>
    <property type="nucleotide sequence ID" value="NM_001168316.2"/>
</dbReference>
<dbReference type="RefSeq" id="NP_777574.2">
    <molecule id="Q3SY77-1"/>
    <property type="nucleotide sequence ID" value="NM_174914.4"/>
</dbReference>
<dbReference type="SMR" id="Q3SY77"/>
<dbReference type="BioGRID" id="127942">
    <property type="interactions" value="20"/>
</dbReference>
<dbReference type="FunCoup" id="Q3SY77">
    <property type="interactions" value="214"/>
</dbReference>
<dbReference type="IntAct" id="Q3SY77">
    <property type="interactions" value="17"/>
</dbReference>
<dbReference type="STRING" id="9606.ENSP00000282507"/>
<dbReference type="CAZy" id="GT1">
    <property type="family name" value="Glycosyltransferase Family 1"/>
</dbReference>
<dbReference type="GlyCosmos" id="Q3SY77">
    <property type="glycosylation" value="1 site, No reported glycans"/>
</dbReference>
<dbReference type="GlyGen" id="Q3SY77">
    <property type="glycosylation" value="1 site, 1 N-linked glycan (1 site)"/>
</dbReference>
<dbReference type="iPTMnet" id="Q3SY77"/>
<dbReference type="PhosphoSitePlus" id="Q3SY77"/>
<dbReference type="BioMuta" id="UGT3A2"/>
<dbReference type="DMDM" id="121942966"/>
<dbReference type="jPOST" id="Q3SY77"/>
<dbReference type="MassIVE" id="Q3SY77"/>
<dbReference type="PaxDb" id="9606-ENSP00000282507"/>
<dbReference type="PeptideAtlas" id="Q3SY77"/>
<dbReference type="ProteomicsDB" id="20123"/>
<dbReference type="ProteomicsDB" id="61846">
    <molecule id="Q3SY77-1"/>
</dbReference>
<dbReference type="Antibodypedia" id="22901">
    <property type="antibodies" value="158 antibodies from 24 providers"/>
</dbReference>
<dbReference type="DNASU" id="167127"/>
<dbReference type="Ensembl" id="ENST00000282507.8">
    <molecule id="Q3SY77-1"/>
    <property type="protein sequence ID" value="ENSP00000282507.3"/>
    <property type="gene ID" value="ENSG00000168671.10"/>
</dbReference>
<dbReference type="Ensembl" id="ENST00000513300.5">
    <molecule id="Q3SY77-2"/>
    <property type="protein sequence ID" value="ENSP00000427404.1"/>
    <property type="gene ID" value="ENSG00000168671.10"/>
</dbReference>
<dbReference type="GeneID" id="167127"/>
<dbReference type="KEGG" id="hsa:167127"/>
<dbReference type="MANE-Select" id="ENST00000282507.8">
    <property type="protein sequence ID" value="ENSP00000282507.3"/>
    <property type="RefSeq nucleotide sequence ID" value="NM_174914.4"/>
    <property type="RefSeq protein sequence ID" value="NP_777574.2"/>
</dbReference>
<dbReference type="UCSC" id="uc003jjz.3">
    <molecule id="Q3SY77-1"/>
    <property type="organism name" value="human"/>
</dbReference>
<dbReference type="AGR" id="HGNC:27266"/>
<dbReference type="CTD" id="167127"/>
<dbReference type="DisGeNET" id="167127"/>
<dbReference type="GeneCards" id="UGT3A2"/>
<dbReference type="HGNC" id="HGNC:27266">
    <property type="gene designation" value="UGT3A2"/>
</dbReference>
<dbReference type="HPA" id="ENSG00000168671">
    <property type="expression patterns" value="Tissue enhanced (bone marrow, lymphoid tissue, skin)"/>
</dbReference>
<dbReference type="MIM" id="616384">
    <property type="type" value="gene"/>
</dbReference>
<dbReference type="neXtProt" id="NX_Q3SY77"/>
<dbReference type="OpenTargets" id="ENSG00000168671"/>
<dbReference type="PharmGKB" id="PA142670643"/>
<dbReference type="VEuPathDB" id="HostDB:ENSG00000168671"/>
<dbReference type="eggNOG" id="KOG1192">
    <property type="taxonomic scope" value="Eukaryota"/>
</dbReference>
<dbReference type="GeneTree" id="ENSGT00940000161263"/>
<dbReference type="HOGENOM" id="CLU_012949_3_2_1"/>
<dbReference type="InParanoid" id="Q3SY77"/>
<dbReference type="OMA" id="YASFQRP"/>
<dbReference type="OrthoDB" id="5835829at2759"/>
<dbReference type="PAN-GO" id="Q3SY77">
    <property type="GO annotations" value="2 GO annotations based on evolutionary models"/>
</dbReference>
<dbReference type="PhylomeDB" id="Q3SY77"/>
<dbReference type="TreeFam" id="TF315472"/>
<dbReference type="BRENDA" id="2.4.1.17">
    <property type="organism ID" value="2681"/>
</dbReference>
<dbReference type="PathwayCommons" id="Q3SY77"/>
<dbReference type="Reactome" id="R-HSA-156588">
    <property type="pathway name" value="Glucuronidation"/>
</dbReference>
<dbReference type="Reactome" id="R-HSA-9749641">
    <property type="pathway name" value="Aspirin ADME"/>
</dbReference>
<dbReference type="SignaLink" id="Q3SY77"/>
<dbReference type="BioGRID-ORCS" id="167127">
    <property type="hits" value="10 hits in 1145 CRISPR screens"/>
</dbReference>
<dbReference type="ChiTaRS" id="UGT3A2">
    <property type="organism name" value="human"/>
</dbReference>
<dbReference type="GenomeRNAi" id="167127"/>
<dbReference type="Pharos" id="Q3SY77">
    <property type="development level" value="Tbio"/>
</dbReference>
<dbReference type="PRO" id="PR:Q3SY77"/>
<dbReference type="Proteomes" id="UP000005640">
    <property type="component" value="Chromosome 5"/>
</dbReference>
<dbReference type="RNAct" id="Q3SY77">
    <property type="molecule type" value="protein"/>
</dbReference>
<dbReference type="Bgee" id="ENSG00000168671">
    <property type="expression patterns" value="Expressed in male germ line stem cell (sensu Vertebrata) in testis and 62 other cell types or tissues"/>
</dbReference>
<dbReference type="ExpressionAtlas" id="Q3SY77">
    <property type="expression patterns" value="baseline and differential"/>
</dbReference>
<dbReference type="GO" id="GO:0043541">
    <property type="term" value="C:UDP-N-acetylglucosamine transferase complex"/>
    <property type="evidence" value="ECO:0000318"/>
    <property type="project" value="GO_Central"/>
</dbReference>
<dbReference type="GO" id="GO:0015020">
    <property type="term" value="F:glucuronosyltransferase activity"/>
    <property type="evidence" value="ECO:0000318"/>
    <property type="project" value="GO_Central"/>
</dbReference>
<dbReference type="GO" id="GO:0008194">
    <property type="term" value="F:UDP-glycosyltransferase activity"/>
    <property type="evidence" value="ECO:0000314"/>
    <property type="project" value="MGI"/>
</dbReference>
<dbReference type="GO" id="GO:0071412">
    <property type="term" value="P:cellular response to genistein"/>
    <property type="evidence" value="ECO:0000314"/>
    <property type="project" value="MGI"/>
</dbReference>
<dbReference type="CDD" id="cd03784">
    <property type="entry name" value="GT1_Gtf-like"/>
    <property type="match status" value="1"/>
</dbReference>
<dbReference type="FunFam" id="3.40.50.2000:FF:000094">
    <property type="entry name" value="UDP-glucuronosyltransferase"/>
    <property type="match status" value="1"/>
</dbReference>
<dbReference type="FunFam" id="3.40.50.2000:FF:000155">
    <property type="entry name" value="UDP-glucuronosyltransferase"/>
    <property type="match status" value="1"/>
</dbReference>
<dbReference type="Gene3D" id="3.40.50.2000">
    <property type="entry name" value="Glycogen Phosphorylase B"/>
    <property type="match status" value="2"/>
</dbReference>
<dbReference type="InterPro" id="IPR050271">
    <property type="entry name" value="UDP-glycosyltransferase"/>
</dbReference>
<dbReference type="InterPro" id="IPR002213">
    <property type="entry name" value="UDP_glucos_trans"/>
</dbReference>
<dbReference type="InterPro" id="IPR035595">
    <property type="entry name" value="UDP_glycos_trans_CS"/>
</dbReference>
<dbReference type="PANTHER" id="PTHR48043">
    <property type="entry name" value="EG:EG0003.4 PROTEIN-RELATED"/>
    <property type="match status" value="1"/>
</dbReference>
<dbReference type="PANTHER" id="PTHR48043:SF24">
    <property type="entry name" value="UDP-GLUCURONOSYLTRANSFERASE 3A2"/>
    <property type="match status" value="1"/>
</dbReference>
<dbReference type="Pfam" id="PF00201">
    <property type="entry name" value="UDPGT"/>
    <property type="match status" value="1"/>
</dbReference>
<dbReference type="SUPFAM" id="SSF53756">
    <property type="entry name" value="UDP-Glycosyltransferase/glycogen phosphorylase"/>
    <property type="match status" value="1"/>
</dbReference>
<dbReference type="PROSITE" id="PS00375">
    <property type="entry name" value="UDPGT"/>
    <property type="match status" value="1"/>
</dbReference>
<accession>Q3SY77</accession>
<accession>B4DUQ7</accession>
<accession>E9PFK7</accession>
<accession>Q6UXC4</accession>
<accession>Q8NBP2</accession>
<proteinExistence type="evidence at protein level"/>
<evidence type="ECO:0000250" key="1"/>
<evidence type="ECO:0000255" key="2"/>
<evidence type="ECO:0000269" key="3">
    <source>
    </source>
</evidence>
<evidence type="ECO:0000303" key="4">
    <source>
    </source>
</evidence>
<evidence type="ECO:0000305" key="5"/>
<reference key="1">
    <citation type="journal article" date="2003" name="Genome Res.">
        <title>The secreted protein discovery initiative (SPDI), a large-scale effort to identify novel human secreted and transmembrane proteins: a bioinformatics assessment.</title>
        <authorList>
            <person name="Clark H.F."/>
            <person name="Gurney A.L."/>
            <person name="Abaya E."/>
            <person name="Baker K."/>
            <person name="Baldwin D.T."/>
            <person name="Brush J."/>
            <person name="Chen J."/>
            <person name="Chow B."/>
            <person name="Chui C."/>
            <person name="Crowley C."/>
            <person name="Currell B."/>
            <person name="Deuel B."/>
            <person name="Dowd P."/>
            <person name="Eaton D."/>
            <person name="Foster J.S."/>
            <person name="Grimaldi C."/>
            <person name="Gu Q."/>
            <person name="Hass P.E."/>
            <person name="Heldens S."/>
            <person name="Huang A."/>
            <person name="Kim H.S."/>
            <person name="Klimowski L."/>
            <person name="Jin Y."/>
            <person name="Johnson S."/>
            <person name="Lee J."/>
            <person name="Lewis L."/>
            <person name="Liao D."/>
            <person name="Mark M.R."/>
            <person name="Robbie E."/>
            <person name="Sanchez C."/>
            <person name="Schoenfeld J."/>
            <person name="Seshagiri S."/>
            <person name="Simmons L."/>
            <person name="Singh J."/>
            <person name="Smith V."/>
            <person name="Stinson J."/>
            <person name="Vagts A."/>
            <person name="Vandlen R.L."/>
            <person name="Watanabe C."/>
            <person name="Wieand D."/>
            <person name="Woods K."/>
            <person name="Xie M.-H."/>
            <person name="Yansura D.G."/>
            <person name="Yi S."/>
            <person name="Yu G."/>
            <person name="Yuan J."/>
            <person name="Zhang M."/>
            <person name="Zhang Z."/>
            <person name="Goddard A.D."/>
            <person name="Wood W.I."/>
            <person name="Godowski P.J."/>
            <person name="Gray A.M."/>
        </authorList>
    </citation>
    <scope>NUCLEOTIDE SEQUENCE [LARGE SCALE MRNA] (ISOFORM 1)</scope>
</reference>
<reference key="2">
    <citation type="journal article" date="2004" name="Nat. Genet.">
        <title>Complete sequencing and characterization of 21,243 full-length human cDNAs.</title>
        <authorList>
            <person name="Ota T."/>
            <person name="Suzuki Y."/>
            <person name="Nishikawa T."/>
            <person name="Otsuki T."/>
            <person name="Sugiyama T."/>
            <person name="Irie R."/>
            <person name="Wakamatsu A."/>
            <person name="Hayashi K."/>
            <person name="Sato H."/>
            <person name="Nagai K."/>
            <person name="Kimura K."/>
            <person name="Makita H."/>
            <person name="Sekine M."/>
            <person name="Obayashi M."/>
            <person name="Nishi T."/>
            <person name="Shibahara T."/>
            <person name="Tanaka T."/>
            <person name="Ishii S."/>
            <person name="Yamamoto J."/>
            <person name="Saito K."/>
            <person name="Kawai Y."/>
            <person name="Isono Y."/>
            <person name="Nakamura Y."/>
            <person name="Nagahari K."/>
            <person name="Murakami K."/>
            <person name="Yasuda T."/>
            <person name="Iwayanagi T."/>
            <person name="Wagatsuma M."/>
            <person name="Shiratori A."/>
            <person name="Sudo H."/>
            <person name="Hosoiri T."/>
            <person name="Kaku Y."/>
            <person name="Kodaira H."/>
            <person name="Kondo H."/>
            <person name="Sugawara M."/>
            <person name="Takahashi M."/>
            <person name="Kanda K."/>
            <person name="Yokoi T."/>
            <person name="Furuya T."/>
            <person name="Kikkawa E."/>
            <person name="Omura Y."/>
            <person name="Abe K."/>
            <person name="Kamihara K."/>
            <person name="Katsuta N."/>
            <person name="Sato K."/>
            <person name="Tanikawa M."/>
            <person name="Yamazaki M."/>
            <person name="Ninomiya K."/>
            <person name="Ishibashi T."/>
            <person name="Yamashita H."/>
            <person name="Murakawa K."/>
            <person name="Fujimori K."/>
            <person name="Tanai H."/>
            <person name="Kimata M."/>
            <person name="Watanabe M."/>
            <person name="Hiraoka S."/>
            <person name="Chiba Y."/>
            <person name="Ishida S."/>
            <person name="Ono Y."/>
            <person name="Takiguchi S."/>
            <person name="Watanabe S."/>
            <person name="Yosida M."/>
            <person name="Hotuta T."/>
            <person name="Kusano J."/>
            <person name="Kanehori K."/>
            <person name="Takahashi-Fujii A."/>
            <person name="Hara H."/>
            <person name="Tanase T.-O."/>
            <person name="Nomura Y."/>
            <person name="Togiya S."/>
            <person name="Komai F."/>
            <person name="Hara R."/>
            <person name="Takeuchi K."/>
            <person name="Arita M."/>
            <person name="Imose N."/>
            <person name="Musashino K."/>
            <person name="Yuuki H."/>
            <person name="Oshima A."/>
            <person name="Sasaki N."/>
            <person name="Aotsuka S."/>
            <person name="Yoshikawa Y."/>
            <person name="Matsunawa H."/>
            <person name="Ichihara T."/>
            <person name="Shiohata N."/>
            <person name="Sano S."/>
            <person name="Moriya S."/>
            <person name="Momiyama H."/>
            <person name="Satoh N."/>
            <person name="Takami S."/>
            <person name="Terashima Y."/>
            <person name="Suzuki O."/>
            <person name="Nakagawa S."/>
            <person name="Senoh A."/>
            <person name="Mizoguchi H."/>
            <person name="Goto Y."/>
            <person name="Shimizu F."/>
            <person name="Wakebe H."/>
            <person name="Hishigaki H."/>
            <person name="Watanabe T."/>
            <person name="Sugiyama A."/>
            <person name="Takemoto M."/>
            <person name="Kawakami B."/>
            <person name="Yamazaki M."/>
            <person name="Watanabe K."/>
            <person name="Kumagai A."/>
            <person name="Itakura S."/>
            <person name="Fukuzumi Y."/>
            <person name="Fujimori Y."/>
            <person name="Komiyama M."/>
            <person name="Tashiro H."/>
            <person name="Tanigami A."/>
            <person name="Fujiwara T."/>
            <person name="Ono T."/>
            <person name="Yamada K."/>
            <person name="Fujii Y."/>
            <person name="Ozaki K."/>
            <person name="Hirao M."/>
            <person name="Ohmori Y."/>
            <person name="Kawabata A."/>
            <person name="Hikiji T."/>
            <person name="Kobatake N."/>
            <person name="Inagaki H."/>
            <person name="Ikema Y."/>
            <person name="Okamoto S."/>
            <person name="Okitani R."/>
            <person name="Kawakami T."/>
            <person name="Noguchi S."/>
            <person name="Itoh T."/>
            <person name="Shigeta K."/>
            <person name="Senba T."/>
            <person name="Matsumura K."/>
            <person name="Nakajima Y."/>
            <person name="Mizuno T."/>
            <person name="Morinaga M."/>
            <person name="Sasaki M."/>
            <person name="Togashi T."/>
            <person name="Oyama M."/>
            <person name="Hata H."/>
            <person name="Watanabe M."/>
            <person name="Komatsu T."/>
            <person name="Mizushima-Sugano J."/>
            <person name="Satoh T."/>
            <person name="Shirai Y."/>
            <person name="Takahashi Y."/>
            <person name="Nakagawa K."/>
            <person name="Okumura K."/>
            <person name="Nagase T."/>
            <person name="Nomura N."/>
            <person name="Kikuchi H."/>
            <person name="Masuho Y."/>
            <person name="Yamashita R."/>
            <person name="Nakai K."/>
            <person name="Yada T."/>
            <person name="Nakamura Y."/>
            <person name="Ohara O."/>
            <person name="Isogai T."/>
            <person name="Sugano S."/>
        </authorList>
    </citation>
    <scope>NUCLEOTIDE SEQUENCE [LARGE SCALE MRNA] (ISOFORM 2)</scope>
</reference>
<reference key="3">
    <citation type="journal article" date="2005" name="DNA Res.">
        <title>Signal sequence and keyword trap in silico for selection of full-length human cDNAs encoding secretion or membrane proteins from oligo-capped cDNA libraries.</title>
        <authorList>
            <person name="Otsuki T."/>
            <person name="Ota T."/>
            <person name="Nishikawa T."/>
            <person name="Hayashi K."/>
            <person name="Suzuki Y."/>
            <person name="Yamamoto J."/>
            <person name="Wakamatsu A."/>
            <person name="Kimura K."/>
            <person name="Sakamoto K."/>
            <person name="Hatano N."/>
            <person name="Kawai Y."/>
            <person name="Ishii S."/>
            <person name="Saito K."/>
            <person name="Kojima S."/>
            <person name="Sugiyama T."/>
            <person name="Ono T."/>
            <person name="Okano K."/>
            <person name="Yoshikawa Y."/>
            <person name="Aotsuka S."/>
            <person name="Sasaki N."/>
            <person name="Hattori A."/>
            <person name="Okumura K."/>
            <person name="Nagai K."/>
            <person name="Sugano S."/>
            <person name="Isogai T."/>
        </authorList>
    </citation>
    <scope>NUCLEOTIDE SEQUENCE [LARGE SCALE MRNA] (ISOFORM 1)</scope>
</reference>
<reference key="4">
    <citation type="journal article" date="2004" name="Nature">
        <title>The DNA sequence and comparative analysis of human chromosome 5.</title>
        <authorList>
            <person name="Schmutz J."/>
            <person name="Martin J."/>
            <person name="Terry A."/>
            <person name="Couronne O."/>
            <person name="Grimwood J."/>
            <person name="Lowry S."/>
            <person name="Gordon L.A."/>
            <person name="Scott D."/>
            <person name="Xie G."/>
            <person name="Huang W."/>
            <person name="Hellsten U."/>
            <person name="Tran-Gyamfi M."/>
            <person name="She X."/>
            <person name="Prabhakar S."/>
            <person name="Aerts A."/>
            <person name="Altherr M."/>
            <person name="Bajorek E."/>
            <person name="Black S."/>
            <person name="Branscomb E."/>
            <person name="Caoile C."/>
            <person name="Challacombe J.F."/>
            <person name="Chan Y.M."/>
            <person name="Denys M."/>
            <person name="Detter J.C."/>
            <person name="Escobar J."/>
            <person name="Flowers D."/>
            <person name="Fotopulos D."/>
            <person name="Glavina T."/>
            <person name="Gomez M."/>
            <person name="Gonzales E."/>
            <person name="Goodstein D."/>
            <person name="Grigoriev I."/>
            <person name="Groza M."/>
            <person name="Hammon N."/>
            <person name="Hawkins T."/>
            <person name="Haydu L."/>
            <person name="Israni S."/>
            <person name="Jett J."/>
            <person name="Kadner K."/>
            <person name="Kimball H."/>
            <person name="Kobayashi A."/>
            <person name="Lopez F."/>
            <person name="Lou Y."/>
            <person name="Martinez D."/>
            <person name="Medina C."/>
            <person name="Morgan J."/>
            <person name="Nandkeshwar R."/>
            <person name="Noonan J.P."/>
            <person name="Pitluck S."/>
            <person name="Pollard M."/>
            <person name="Predki P."/>
            <person name="Priest J."/>
            <person name="Ramirez L."/>
            <person name="Retterer J."/>
            <person name="Rodriguez A."/>
            <person name="Rogers S."/>
            <person name="Salamov A."/>
            <person name="Salazar A."/>
            <person name="Thayer N."/>
            <person name="Tice H."/>
            <person name="Tsai M."/>
            <person name="Ustaszewska A."/>
            <person name="Vo N."/>
            <person name="Wheeler J."/>
            <person name="Wu K."/>
            <person name="Yang J."/>
            <person name="Dickson M."/>
            <person name="Cheng J.-F."/>
            <person name="Eichler E.E."/>
            <person name="Olsen A."/>
            <person name="Pennacchio L.A."/>
            <person name="Rokhsar D.S."/>
            <person name="Richardson P."/>
            <person name="Lucas S.M."/>
            <person name="Myers R.M."/>
            <person name="Rubin E.M."/>
        </authorList>
    </citation>
    <scope>NUCLEOTIDE SEQUENCE [LARGE SCALE GENOMIC DNA]</scope>
</reference>
<reference key="5">
    <citation type="journal article" date="2004" name="Genome Res.">
        <title>The status, quality, and expansion of the NIH full-length cDNA project: the Mammalian Gene Collection (MGC).</title>
        <authorList>
            <consortium name="The MGC Project Team"/>
        </authorList>
    </citation>
    <scope>NUCLEOTIDE SEQUENCE [LARGE SCALE MRNA] (ISOFORM 1)</scope>
</reference>
<reference key="6">
    <citation type="journal article" date="2006" name="Science">
        <title>The consensus coding sequences of human breast and colorectal cancers.</title>
        <authorList>
            <person name="Sjoeblom T."/>
            <person name="Jones S."/>
            <person name="Wood L.D."/>
            <person name="Parsons D.W."/>
            <person name="Lin J."/>
            <person name="Barber T.D."/>
            <person name="Mandelker D."/>
            <person name="Leary R.J."/>
            <person name="Ptak J."/>
            <person name="Silliman N."/>
            <person name="Szabo S."/>
            <person name="Buckhaults P."/>
            <person name="Farrell C."/>
            <person name="Meeh P."/>
            <person name="Markowitz S.D."/>
            <person name="Willis J."/>
            <person name="Dawson D."/>
            <person name="Willson J.K.V."/>
            <person name="Gazdar A.F."/>
            <person name="Hartigan J."/>
            <person name="Wu L."/>
            <person name="Liu C."/>
            <person name="Parmigiani G."/>
            <person name="Park B.H."/>
            <person name="Bachman K.E."/>
            <person name="Papadopoulos N."/>
            <person name="Vogelstein B."/>
            <person name="Kinzler K.W."/>
            <person name="Velculescu V.E."/>
        </authorList>
    </citation>
    <scope>VARIANT [LARGE SCALE ANALYSIS] HIS-515</scope>
</reference>
<sequence>MAGQRVLLLVGFLLPGVLLSEAAKILTISTVGGSHYLLMDRVSQILQDHGHNVTMLNHKRGPFMPDFKKEEKSYQVISWLAPEDHQREFKKSFDFFLEETLGGRGKFENLLNVLEYLALQCSHFLNRKDIMDSLKNENFDMVIVETFDYCPFLIAEKLGKPFVAILSTSFGSLEFGLPIPLSYVPVFRSLLTDHMDFWGRVKNFLMFFSFCRRQQHMQSTFDNTIKEHFTEGSRPVLSHLLLKAELWFINSDFAFDFARPLLPNTVYVGGLMEKPIKPVPQDLENFIAKFGDSGFVLVTLGSMVNTCQNPEIFKEMNNAFAHLPQGVIWKCQCSHWPKDVHLAANVKIVDWLPQSDLLAHPSIRLFVTHGGQNSIMEAIQHGVPMVGIPLFGDQPENMVRVEAKKFGVSIQLKKLKAETLALKMKQIMEDKRYKSAAVAASVILRSHPLSPTQRLVGWIDHVLQTGGATHLKPYVFQQPWHEQYLLDVFVFLLGLTLGTLWLCGKLLGMAVWWLRGARKVKET</sequence>